<protein>
    <recommendedName>
        <fullName evidence="10">Adipolin</fullName>
    </recommendedName>
    <alternativeName>
        <fullName evidence="10">Adipose-derived insulin-sensitizing factor</fullName>
    </alternativeName>
    <alternativeName>
        <fullName>Complement C1q tumor necrosis factor-related protein 12</fullName>
    </alternativeName>
    <component>
        <recommendedName>
            <fullName>Adipolin fC1QTNF12</fullName>
        </recommendedName>
        <alternativeName>
            <fullName evidence="11">Adipolin fCTRP12</fullName>
        </alternativeName>
        <alternativeName>
            <fullName>Adipolin full-length form</fullName>
        </alternativeName>
    </component>
    <component>
        <recommendedName>
            <fullName>Adipolin gC1QTNF12</fullName>
        </recommendedName>
        <alternativeName>
            <fullName>Adipolin cleaved form</fullName>
        </alternativeName>
        <alternativeName>
            <fullName evidence="11">Adipolin gCTRP12</fullName>
        </alternativeName>
    </component>
</protein>
<proteinExistence type="evidence at protein level"/>
<dbReference type="EMBL" id="DQ002404">
    <property type="protein sequence ID" value="AAY21936.1"/>
    <property type="molecule type" value="mRNA"/>
</dbReference>
<dbReference type="EMBL" id="AK002876">
    <property type="protein sequence ID" value="BAB22423.1"/>
    <property type="molecule type" value="mRNA"/>
</dbReference>
<dbReference type="EMBL" id="AK004116">
    <property type="protein sequence ID" value="BAB23178.1"/>
    <property type="molecule type" value="mRNA"/>
</dbReference>
<dbReference type="EMBL" id="AL627204">
    <property type="status" value="NOT_ANNOTATED_CDS"/>
    <property type="molecule type" value="Genomic_DNA"/>
</dbReference>
<dbReference type="EMBL" id="BC026939">
    <property type="protein sequence ID" value="AAH26939.1"/>
    <property type="molecule type" value="mRNA"/>
</dbReference>
<dbReference type="CCDS" id="CCDS19052.1"/>
<dbReference type="RefSeq" id="NP_080401.1">
    <property type="nucleotide sequence ID" value="NM_026125.3"/>
</dbReference>
<dbReference type="FunCoup" id="Q8R2Z0">
    <property type="interactions" value="507"/>
</dbReference>
<dbReference type="STRING" id="10090.ENSMUSP00000024338"/>
<dbReference type="GlyCosmos" id="Q8R2Z0">
    <property type="glycosylation" value="1 site, No reported glycans"/>
</dbReference>
<dbReference type="GlyGen" id="Q8R2Z0">
    <property type="glycosylation" value="3 sites, 1 N-linked glycan (1 site)"/>
</dbReference>
<dbReference type="iPTMnet" id="Q8R2Z0"/>
<dbReference type="PhosphoSitePlus" id="Q8R2Z0"/>
<dbReference type="CPTAC" id="non-CPTAC-3558"/>
<dbReference type="PaxDb" id="10090-ENSMUSP00000024338"/>
<dbReference type="PeptideAtlas" id="Q8R2Z0"/>
<dbReference type="ProteomicsDB" id="296068"/>
<dbReference type="Antibodypedia" id="12127">
    <property type="antibodies" value="39 antibodies from 13 providers"/>
</dbReference>
<dbReference type="DNASU" id="67389"/>
<dbReference type="Ensembl" id="ENSMUST00000024338.5">
    <property type="protein sequence ID" value="ENSMUSP00000024338.5"/>
    <property type="gene ID" value="ENSMUSG00000023571.5"/>
</dbReference>
<dbReference type="GeneID" id="67389"/>
<dbReference type="KEGG" id="mmu:67389"/>
<dbReference type="UCSC" id="uc008wfp.2">
    <property type="organism name" value="mouse"/>
</dbReference>
<dbReference type="AGR" id="MGI:1914639"/>
<dbReference type="CTD" id="388581"/>
<dbReference type="MGI" id="MGI:1914639">
    <property type="gene designation" value="C1qtnf12"/>
</dbReference>
<dbReference type="VEuPathDB" id="HostDB:ENSMUSG00000023571"/>
<dbReference type="eggNOG" id="ENOG502QQVR">
    <property type="taxonomic scope" value="Eukaryota"/>
</dbReference>
<dbReference type="GeneTree" id="ENSGT00940000160300"/>
<dbReference type="HOGENOM" id="CLU_057344_1_0_1"/>
<dbReference type="InParanoid" id="Q8R2Z0"/>
<dbReference type="OMA" id="RCRGRDK"/>
<dbReference type="OrthoDB" id="6431870at2759"/>
<dbReference type="PhylomeDB" id="Q8R2Z0"/>
<dbReference type="TreeFam" id="TF331282"/>
<dbReference type="BioGRID-ORCS" id="67389">
    <property type="hits" value="1 hit in 81 CRISPR screens"/>
</dbReference>
<dbReference type="ChiTaRS" id="Fam132a">
    <property type="organism name" value="mouse"/>
</dbReference>
<dbReference type="PRO" id="PR:Q8R2Z0"/>
<dbReference type="Proteomes" id="UP000000589">
    <property type="component" value="Chromosome 4"/>
</dbReference>
<dbReference type="RNAct" id="Q8R2Z0">
    <property type="molecule type" value="protein"/>
</dbReference>
<dbReference type="Bgee" id="ENSMUSG00000023571">
    <property type="expression patterns" value="Expressed in metanephric renal vesicle and 251 other cell types or tissues"/>
</dbReference>
<dbReference type="GO" id="GO:0005576">
    <property type="term" value="C:extracellular region"/>
    <property type="evidence" value="ECO:0000314"/>
    <property type="project" value="UniProtKB"/>
</dbReference>
<dbReference type="GO" id="GO:0005615">
    <property type="term" value="C:extracellular space"/>
    <property type="evidence" value="ECO:0000314"/>
    <property type="project" value="MGI"/>
</dbReference>
<dbReference type="GO" id="GO:0005179">
    <property type="term" value="F:hormone activity"/>
    <property type="evidence" value="ECO:0000314"/>
    <property type="project" value="UniProtKB"/>
</dbReference>
<dbReference type="GO" id="GO:0046323">
    <property type="term" value="P:D-glucose import"/>
    <property type="evidence" value="ECO:0000315"/>
    <property type="project" value="MGI"/>
</dbReference>
<dbReference type="GO" id="GO:0051649">
    <property type="term" value="P:establishment of localization in cell"/>
    <property type="evidence" value="ECO:0000315"/>
    <property type="project" value="MGI"/>
</dbReference>
<dbReference type="GO" id="GO:0006094">
    <property type="term" value="P:gluconeogenesis"/>
    <property type="evidence" value="ECO:0000314"/>
    <property type="project" value="MGI"/>
</dbReference>
<dbReference type="GO" id="GO:0045721">
    <property type="term" value="P:negative regulation of gluconeogenesis"/>
    <property type="evidence" value="ECO:0000314"/>
    <property type="project" value="MGI"/>
</dbReference>
<dbReference type="GO" id="GO:0050728">
    <property type="term" value="P:negative regulation of inflammatory response"/>
    <property type="evidence" value="ECO:0000314"/>
    <property type="project" value="MGI"/>
</dbReference>
<dbReference type="GO" id="GO:0043491">
    <property type="term" value="P:phosphatidylinositol 3-kinase/protein kinase B signal transduction"/>
    <property type="evidence" value="ECO:0000314"/>
    <property type="project" value="MGI"/>
</dbReference>
<dbReference type="GO" id="GO:0046326">
    <property type="term" value="P:positive regulation of D-glucose import"/>
    <property type="evidence" value="ECO:0000315"/>
    <property type="project" value="MGI"/>
</dbReference>
<dbReference type="GO" id="GO:0046628">
    <property type="term" value="P:positive regulation of insulin receptor signaling pathway"/>
    <property type="evidence" value="ECO:0000314"/>
    <property type="project" value="MGI"/>
</dbReference>
<dbReference type="GO" id="GO:0035774">
    <property type="term" value="P:positive regulation of insulin secretion involved in cellular response to glucose stimulus"/>
    <property type="evidence" value="ECO:0000314"/>
    <property type="project" value="MGI"/>
</dbReference>
<dbReference type="GO" id="GO:0051897">
    <property type="term" value="P:positive regulation of phosphatidylinositol 3-kinase/protein kinase B signal transduction"/>
    <property type="evidence" value="ECO:0000314"/>
    <property type="project" value="MGI"/>
</dbReference>
<dbReference type="GO" id="GO:0046324">
    <property type="term" value="P:regulation of D-glucose import"/>
    <property type="evidence" value="ECO:0000314"/>
    <property type="project" value="UniProtKB"/>
</dbReference>
<dbReference type="GO" id="GO:0010906">
    <property type="term" value="P:regulation of glucose metabolic process"/>
    <property type="evidence" value="ECO:0000314"/>
    <property type="project" value="MGI"/>
</dbReference>
<dbReference type="FunFam" id="2.60.120.40:FF:000012">
    <property type="entry name" value="Adipolin isoform X1"/>
    <property type="match status" value="1"/>
</dbReference>
<dbReference type="Gene3D" id="2.60.120.40">
    <property type="match status" value="1"/>
</dbReference>
<dbReference type="Gene3D" id="1.20.5.320">
    <property type="entry name" value="6-Phosphogluconate Dehydrogenase, domain 3"/>
    <property type="match status" value="1"/>
</dbReference>
<dbReference type="InterPro" id="IPR052136">
    <property type="entry name" value="Adipolin/Erythroferrone-rel"/>
</dbReference>
<dbReference type="InterPro" id="IPR001073">
    <property type="entry name" value="C1q_dom"/>
</dbReference>
<dbReference type="InterPro" id="IPR008983">
    <property type="entry name" value="Tumour_necrosis_fac-like_dom"/>
</dbReference>
<dbReference type="PANTHER" id="PTHR24019">
    <property type="entry name" value="ADIPOLIN"/>
    <property type="match status" value="1"/>
</dbReference>
<dbReference type="PANTHER" id="PTHR24019:SF12">
    <property type="entry name" value="ADIPOLIN"/>
    <property type="match status" value="1"/>
</dbReference>
<dbReference type="SUPFAM" id="SSF49842">
    <property type="entry name" value="TNF-like"/>
    <property type="match status" value="1"/>
</dbReference>
<dbReference type="PROSITE" id="PS50871">
    <property type="entry name" value="C1Q"/>
    <property type="match status" value="1"/>
</dbReference>
<gene>
    <name type="primary">C1qtnf12</name>
    <name type="synonym">C1qdc2</name>
    <name type="synonym">Ctrp12</name>
    <name type="synonym">Fam132a</name>
</gene>
<evidence type="ECO:0000255" key="1"/>
<evidence type="ECO:0000255" key="2">
    <source>
        <dbReference type="PROSITE-ProRule" id="PRU00368"/>
    </source>
</evidence>
<evidence type="ECO:0000256" key="3">
    <source>
        <dbReference type="SAM" id="MobiDB-lite"/>
    </source>
</evidence>
<evidence type="ECO:0000269" key="4">
    <source>
    </source>
</evidence>
<evidence type="ECO:0000269" key="5">
    <source>
    </source>
</evidence>
<evidence type="ECO:0000269" key="6">
    <source>
    </source>
</evidence>
<evidence type="ECO:0000269" key="7">
    <source>
    </source>
</evidence>
<evidence type="ECO:0000269" key="8">
    <source>
    </source>
</evidence>
<evidence type="ECO:0000269" key="9">
    <source>
    </source>
</evidence>
<evidence type="ECO:0000303" key="10">
    <source>
    </source>
</evidence>
<evidence type="ECO:0000303" key="11">
    <source>
    </source>
</evidence>
<evidence type="ECO:0000305" key="12"/>
<accession>Q8R2Z0</accession>
<accession>Q9CQI8</accession>
<organism>
    <name type="scientific">Mus musculus</name>
    <name type="common">Mouse</name>
    <dbReference type="NCBI Taxonomy" id="10090"/>
    <lineage>
        <taxon>Eukaryota</taxon>
        <taxon>Metazoa</taxon>
        <taxon>Chordata</taxon>
        <taxon>Craniata</taxon>
        <taxon>Vertebrata</taxon>
        <taxon>Euteleostomi</taxon>
        <taxon>Mammalia</taxon>
        <taxon>Eutheria</taxon>
        <taxon>Euarchontoglires</taxon>
        <taxon>Glires</taxon>
        <taxon>Rodentia</taxon>
        <taxon>Myomorpha</taxon>
        <taxon>Muroidea</taxon>
        <taxon>Muridae</taxon>
        <taxon>Murinae</taxon>
        <taxon>Mus</taxon>
        <taxon>Mus</taxon>
    </lineage>
</organism>
<sequence length="308" mass="33267">MWAWGWAAAALLWLQTAGAGARQELKKSRQLFARVDSPNITTSNREGFPGSVKPPEASGPELSDAHMTWLNFVRRPDDGSSRKRCRGRDKKSRGLSGLPGPPGPPGPPGPPGSPGVGVTPEALLQEFQEILKEATELRFSGLPDTLLPQEPSQRLVVEAFYCRLKGPVLVDKKTLVELQGFQAPTTQGAFLRGSGLSLSLGRFTAPVSAIFQFSASLHVDHSELQGRGRLRTRDMVRVLICIESLCHRHTSLEAVSGLESNSRVFTVQVQGLLHLQSGQYVSVFVDNSSGAVLTIQNTSSFSGMLLGT</sequence>
<comment type="function">
    <text evidence="4 5">Insulin-sensitizing adipocyte-secreted protein (adipokine) that regulates glucose metabolism in liver and adipose tissue. Promotes glucose uptake in adipocytes and suppresses de novo glucose production in hepatocytes via the PI3K-Akt signaling pathway. Administration lead to reduction of blood glucose. Able to attenuate inflammation in fat tissue (PubMed:21849507, PubMed:22275362).</text>
</comment>
<comment type="function">
    <molecule>Adipolin fC1QTNF12</molecule>
    <text evidence="6">Acts by activating the Akt signaling in hepatocytes and adipocytes. Not able to increase insulin-stimulated glucose uptake in adipocytes (PubMed:22942287).</text>
</comment>
<comment type="function">
    <molecule>Adipolin gC1QTNF12</molecule>
    <text evidence="6">Acts by activating the MAP kinase. Increases insulin-stimulated glucose uptake in adipocytes (PubMed:22942287).</text>
</comment>
<comment type="subunit">
    <text evidence="6">Homomultimer; disulfide-linked (PubMed:22942287). Adipolin fC1QTNF12: homotrimer; disulfide-linked (PubMed:22942287). Adipolin gC1QTNF12: homodimer; disulfide-linked (PubMed:22942287). May interact with ERFE.</text>
</comment>
<comment type="subcellular location">
    <molecule>Adipolin fC1QTNF12</molecule>
    <subcellularLocation>
        <location evidence="5 6">Secreted</location>
    </subcellularLocation>
</comment>
<comment type="subcellular location">
    <molecule>Adipolin gC1QTNF12</molecule>
    <subcellularLocation>
        <location evidence="5 6">Secreted</location>
    </subcellularLocation>
    <text evidence="5">In serum is the predominant form.</text>
</comment>
<comment type="tissue specificity">
    <text evidence="4 5">Widely expressed, with high expression in subcutaneous and epididymal white adipose tissues and brown adipose tissue. Expressed in adipocytes (at protein level).</text>
</comment>
<comment type="induction">
    <text evidence="4 5 7 8 9">During adipogenesis. Upon insulin treatment. Up-regulated in obeses mice. Transcription is activated by KLF3 and KLF15.</text>
</comment>
<comment type="PTM">
    <text evidence="6">Processed into Adipolin fC1QTNF12 and Adipolin gC1QTNF12 by FURIN (PubMed:22942287). Insulin enhances endogenous C1QTNF12 cleavage (PubMed:22942287).</text>
</comment>
<comment type="similarity">
    <text evidence="12">Belongs to the adipolin/erythroferrone family.</text>
</comment>
<keyword id="KW-0903">Direct protein sequencing</keyword>
<keyword id="KW-1015">Disulfide bond</keyword>
<keyword id="KW-0325">Glycoprotein</keyword>
<keyword id="KW-0372">Hormone</keyword>
<keyword id="KW-1185">Reference proteome</keyword>
<keyword id="KW-0964">Secreted</keyword>
<keyword id="KW-0732">Signal</keyword>
<feature type="signal peptide" evidence="1">
    <location>
        <begin position="1"/>
        <end position="21"/>
    </location>
</feature>
<feature type="chain" id="PRO_0000284355" description="Adipolin fC1QTNF12">
    <location>
        <begin position="22"/>
        <end position="308"/>
    </location>
</feature>
<feature type="chain" id="PRO_0000430249" description="Adipolin gC1QTNF12">
    <location>
        <begin position="92"/>
        <end position="308"/>
    </location>
</feature>
<feature type="domain" description="C1q" evidence="2">
    <location>
        <begin position="153"/>
        <end position="308"/>
    </location>
</feature>
<feature type="region of interest" description="Disordered" evidence="3">
    <location>
        <begin position="36"/>
        <end position="119"/>
    </location>
</feature>
<feature type="compositionally biased region" description="Basic residues" evidence="3">
    <location>
        <begin position="82"/>
        <end position="93"/>
    </location>
</feature>
<feature type="compositionally biased region" description="Pro residues" evidence="3">
    <location>
        <begin position="99"/>
        <end position="113"/>
    </location>
</feature>
<feature type="site" description="Cleavage; by FURIN" evidence="6">
    <location>
        <begin position="91"/>
        <end position="92"/>
    </location>
</feature>
<feature type="site" description="Not glycosylated" evidence="6">
    <location>
        <position position="287"/>
    </location>
</feature>
<feature type="site" description="Not glycosylated" evidence="6">
    <location>
        <position position="297"/>
    </location>
</feature>
<feature type="glycosylation site" description="N-linked (GlcNAc...) asparagine" evidence="6">
    <location>
        <position position="39"/>
    </location>
</feature>
<feature type="mutagenesis site" description="Decreased N-glycosylation." evidence="6">
    <original>N</original>
    <variation>A</variation>
    <location>
        <position position="39"/>
    </location>
</feature>
<feature type="mutagenesis site" description="Abolishes multimeric complex formation." evidence="6">
    <original>C</original>
    <variation>A</variation>
    <location>
        <position position="85"/>
    </location>
</feature>
<feature type="mutagenesis site" description="Nearly abolishes protein processing." evidence="6 7">
    <original>KKSR</original>
    <variation>AASA</variation>
    <location>
        <begin position="90"/>
        <end position="93"/>
    </location>
</feature>
<feature type="mutagenesis site" description="Abolishes protein processing." evidence="6 7">
    <location>
        <begin position="90"/>
        <end position="93"/>
    </location>
</feature>
<feature type="mutagenesis site" description="Enhances protein processing." evidence="6">
    <original>R</original>
    <variation>A</variation>
    <location>
        <position position="93"/>
    </location>
</feature>
<feature type="sequence conflict" description="In Ref. 4; AAH26939." evidence="12" ref="4">
    <original>G</original>
    <variation>D</variation>
    <location>
        <position position="117"/>
    </location>
</feature>
<reference key="1">
    <citation type="journal article" date="2011" name="J. Biol. Chem.">
        <title>Adipolin/C1qdc2/CTRP12 protein functions as an adipokine that improves glucose metabolism.</title>
        <authorList>
            <person name="Enomoto T."/>
            <person name="Ohashi K."/>
            <person name="Shibata R."/>
            <person name="Higuchi A."/>
            <person name="Maruyama S."/>
            <person name="Izumiya Y."/>
            <person name="Walsh K."/>
            <person name="Murohara T."/>
            <person name="Ouchi N."/>
        </authorList>
    </citation>
    <scope>NUCLEOTIDE SEQUENCE [MRNA]</scope>
    <scope>SUBCELLULAR LOCATION</scope>
    <scope>TISSUE SPECIFICITY</scope>
    <scope>INDUCTION</scope>
    <source>
        <strain>C57BL/6J</strain>
    </source>
</reference>
<reference key="2">
    <citation type="journal article" date="2005" name="Science">
        <title>The transcriptional landscape of the mammalian genome.</title>
        <authorList>
            <person name="Carninci P."/>
            <person name="Kasukawa T."/>
            <person name="Katayama S."/>
            <person name="Gough J."/>
            <person name="Frith M.C."/>
            <person name="Maeda N."/>
            <person name="Oyama R."/>
            <person name="Ravasi T."/>
            <person name="Lenhard B."/>
            <person name="Wells C."/>
            <person name="Kodzius R."/>
            <person name="Shimokawa K."/>
            <person name="Bajic V.B."/>
            <person name="Brenner S.E."/>
            <person name="Batalov S."/>
            <person name="Forrest A.R."/>
            <person name="Zavolan M."/>
            <person name="Davis M.J."/>
            <person name="Wilming L.G."/>
            <person name="Aidinis V."/>
            <person name="Allen J.E."/>
            <person name="Ambesi-Impiombato A."/>
            <person name="Apweiler R."/>
            <person name="Aturaliya R.N."/>
            <person name="Bailey T.L."/>
            <person name="Bansal M."/>
            <person name="Baxter L."/>
            <person name="Beisel K.W."/>
            <person name="Bersano T."/>
            <person name="Bono H."/>
            <person name="Chalk A.M."/>
            <person name="Chiu K.P."/>
            <person name="Choudhary V."/>
            <person name="Christoffels A."/>
            <person name="Clutterbuck D.R."/>
            <person name="Crowe M.L."/>
            <person name="Dalla E."/>
            <person name="Dalrymple B.P."/>
            <person name="de Bono B."/>
            <person name="Della Gatta G."/>
            <person name="di Bernardo D."/>
            <person name="Down T."/>
            <person name="Engstrom P."/>
            <person name="Fagiolini M."/>
            <person name="Faulkner G."/>
            <person name="Fletcher C.F."/>
            <person name="Fukushima T."/>
            <person name="Furuno M."/>
            <person name="Futaki S."/>
            <person name="Gariboldi M."/>
            <person name="Georgii-Hemming P."/>
            <person name="Gingeras T.R."/>
            <person name="Gojobori T."/>
            <person name="Green R.E."/>
            <person name="Gustincich S."/>
            <person name="Harbers M."/>
            <person name="Hayashi Y."/>
            <person name="Hensch T.K."/>
            <person name="Hirokawa N."/>
            <person name="Hill D."/>
            <person name="Huminiecki L."/>
            <person name="Iacono M."/>
            <person name="Ikeo K."/>
            <person name="Iwama A."/>
            <person name="Ishikawa T."/>
            <person name="Jakt M."/>
            <person name="Kanapin A."/>
            <person name="Katoh M."/>
            <person name="Kawasawa Y."/>
            <person name="Kelso J."/>
            <person name="Kitamura H."/>
            <person name="Kitano H."/>
            <person name="Kollias G."/>
            <person name="Krishnan S.P."/>
            <person name="Kruger A."/>
            <person name="Kummerfeld S.K."/>
            <person name="Kurochkin I.V."/>
            <person name="Lareau L.F."/>
            <person name="Lazarevic D."/>
            <person name="Lipovich L."/>
            <person name="Liu J."/>
            <person name="Liuni S."/>
            <person name="McWilliam S."/>
            <person name="Madan Babu M."/>
            <person name="Madera M."/>
            <person name="Marchionni L."/>
            <person name="Matsuda H."/>
            <person name="Matsuzawa S."/>
            <person name="Miki H."/>
            <person name="Mignone F."/>
            <person name="Miyake S."/>
            <person name="Morris K."/>
            <person name="Mottagui-Tabar S."/>
            <person name="Mulder N."/>
            <person name="Nakano N."/>
            <person name="Nakauchi H."/>
            <person name="Ng P."/>
            <person name="Nilsson R."/>
            <person name="Nishiguchi S."/>
            <person name="Nishikawa S."/>
            <person name="Nori F."/>
            <person name="Ohara O."/>
            <person name="Okazaki Y."/>
            <person name="Orlando V."/>
            <person name="Pang K.C."/>
            <person name="Pavan W.J."/>
            <person name="Pavesi G."/>
            <person name="Pesole G."/>
            <person name="Petrovsky N."/>
            <person name="Piazza S."/>
            <person name="Reed J."/>
            <person name="Reid J.F."/>
            <person name="Ring B.Z."/>
            <person name="Ringwald M."/>
            <person name="Rost B."/>
            <person name="Ruan Y."/>
            <person name="Salzberg S.L."/>
            <person name="Sandelin A."/>
            <person name="Schneider C."/>
            <person name="Schoenbach C."/>
            <person name="Sekiguchi K."/>
            <person name="Semple C.A."/>
            <person name="Seno S."/>
            <person name="Sessa L."/>
            <person name="Sheng Y."/>
            <person name="Shibata Y."/>
            <person name="Shimada H."/>
            <person name="Shimada K."/>
            <person name="Silva D."/>
            <person name="Sinclair B."/>
            <person name="Sperling S."/>
            <person name="Stupka E."/>
            <person name="Sugiura K."/>
            <person name="Sultana R."/>
            <person name="Takenaka Y."/>
            <person name="Taki K."/>
            <person name="Tammoja K."/>
            <person name="Tan S.L."/>
            <person name="Tang S."/>
            <person name="Taylor M.S."/>
            <person name="Tegner J."/>
            <person name="Teichmann S.A."/>
            <person name="Ueda H.R."/>
            <person name="van Nimwegen E."/>
            <person name="Verardo R."/>
            <person name="Wei C.L."/>
            <person name="Yagi K."/>
            <person name="Yamanishi H."/>
            <person name="Zabarovsky E."/>
            <person name="Zhu S."/>
            <person name="Zimmer A."/>
            <person name="Hide W."/>
            <person name="Bult C."/>
            <person name="Grimmond S.M."/>
            <person name="Teasdale R.D."/>
            <person name="Liu E.T."/>
            <person name="Brusic V."/>
            <person name="Quackenbush J."/>
            <person name="Wahlestedt C."/>
            <person name="Mattick J.S."/>
            <person name="Hume D.A."/>
            <person name="Kai C."/>
            <person name="Sasaki D."/>
            <person name="Tomaru Y."/>
            <person name="Fukuda S."/>
            <person name="Kanamori-Katayama M."/>
            <person name="Suzuki M."/>
            <person name="Aoki J."/>
            <person name="Arakawa T."/>
            <person name="Iida J."/>
            <person name="Imamura K."/>
            <person name="Itoh M."/>
            <person name="Kato T."/>
            <person name="Kawaji H."/>
            <person name="Kawagashira N."/>
            <person name="Kawashima T."/>
            <person name="Kojima M."/>
            <person name="Kondo S."/>
            <person name="Konno H."/>
            <person name="Nakano K."/>
            <person name="Ninomiya N."/>
            <person name="Nishio T."/>
            <person name="Okada M."/>
            <person name="Plessy C."/>
            <person name="Shibata K."/>
            <person name="Shiraki T."/>
            <person name="Suzuki S."/>
            <person name="Tagami M."/>
            <person name="Waki K."/>
            <person name="Watahiki A."/>
            <person name="Okamura-Oho Y."/>
            <person name="Suzuki H."/>
            <person name="Kawai J."/>
            <person name="Hayashizaki Y."/>
        </authorList>
    </citation>
    <scope>NUCLEOTIDE SEQUENCE [LARGE SCALE MRNA]</scope>
    <source>
        <strain>C57BL/6J</strain>
        <tissue>Kidney</tissue>
    </source>
</reference>
<reference key="3">
    <citation type="journal article" date="2009" name="PLoS Biol.">
        <title>Lineage-specific biology revealed by a finished genome assembly of the mouse.</title>
        <authorList>
            <person name="Church D.M."/>
            <person name="Goodstadt L."/>
            <person name="Hillier L.W."/>
            <person name="Zody M.C."/>
            <person name="Goldstein S."/>
            <person name="She X."/>
            <person name="Bult C.J."/>
            <person name="Agarwala R."/>
            <person name="Cherry J.L."/>
            <person name="DiCuccio M."/>
            <person name="Hlavina W."/>
            <person name="Kapustin Y."/>
            <person name="Meric P."/>
            <person name="Maglott D."/>
            <person name="Birtle Z."/>
            <person name="Marques A.C."/>
            <person name="Graves T."/>
            <person name="Zhou S."/>
            <person name="Teague B."/>
            <person name="Potamousis K."/>
            <person name="Churas C."/>
            <person name="Place M."/>
            <person name="Herschleb J."/>
            <person name="Runnheim R."/>
            <person name="Forrest D."/>
            <person name="Amos-Landgraf J."/>
            <person name="Schwartz D.C."/>
            <person name="Cheng Z."/>
            <person name="Lindblad-Toh K."/>
            <person name="Eichler E.E."/>
            <person name="Ponting C.P."/>
        </authorList>
    </citation>
    <scope>NUCLEOTIDE SEQUENCE [LARGE SCALE GENOMIC DNA]</scope>
    <source>
        <strain>C57BL/6J</strain>
    </source>
</reference>
<reference key="4">
    <citation type="journal article" date="2004" name="Genome Res.">
        <title>The status, quality, and expansion of the NIH full-length cDNA project: the Mammalian Gene Collection (MGC).</title>
        <authorList>
            <consortium name="The MGC Project Team"/>
        </authorList>
    </citation>
    <scope>NUCLEOTIDE SEQUENCE [LARGE SCALE MRNA]</scope>
    <source>
        <strain>FVB/N</strain>
        <tissue>Mammary tumor</tissue>
    </source>
</reference>
<reference key="5">
    <citation type="journal article" date="2012" name="J. Biol. Chem.">
        <title>C1q/TNF-related protein-12 (CTRP12), a novel adipokine that improves insulin sensitivity and glycemic control in mouse models of obesity and diabetes.</title>
        <authorList>
            <person name="Wei Z."/>
            <person name="Peterson J.M."/>
            <person name="Lei X."/>
            <person name="Cebotaru L."/>
            <person name="Wolfgang M.J."/>
            <person name="Baldeviano G.C."/>
            <person name="Wong G.W."/>
        </authorList>
    </citation>
    <scope>PARTIAL PROTEIN SEQUENCE</scope>
    <scope>FUNCTION</scope>
    <scope>SUBCELLULAR LOCATION</scope>
    <scope>PROTEOLYTIC PROCESSING</scope>
    <scope>TISSUE SPECIFICITY</scope>
    <scope>INDUCTION</scope>
</reference>
<reference key="6">
    <citation type="journal article" date="2012" name="Biochem. Biophys. Res. Commun.">
        <title>Regulation of adipolin/CTRP12 cleavage by obesity.</title>
        <authorList>
            <person name="Enomoto T."/>
            <person name="Shibata R."/>
            <person name="Ohashi K."/>
            <person name="Kambara T."/>
            <person name="Kataoka Y."/>
            <person name="Uemura Y."/>
            <person name="Yuasa D."/>
            <person name="Murohara T."/>
            <person name="Ouchi N."/>
        </authorList>
    </citation>
    <scope>PROTEOLYTIC PROCESSING</scope>
    <scope>INDUCTION</scope>
    <scope>MUTAGENESIS OF 90-LYS--ARG-93</scope>
</reference>
<reference key="7">
    <citation type="journal article" date="2012" name="J. Biol. Chem.">
        <title>Myonectin (CTRP15), a novel myokine that links skeletal muscle to systemic lipid homeostasis.</title>
        <authorList>
            <person name="Seldin M.M."/>
            <person name="Peterson J.M."/>
            <person name="Byerly M.S."/>
            <person name="Wei Z."/>
            <person name="Wong G.W."/>
        </authorList>
    </citation>
    <scope>INTERACTION WITH ERFE</scope>
</reference>
<reference key="8">
    <citation type="journal article" date="2012" name="J. Biol. Chem.">
        <title>Endopeptidase cleavage generates a functionally distinct isoform of C1q/tumor necrosis factor-related protein-12 (CTRP12) with an altered oligomeric state and signaling specificity.</title>
        <authorList>
            <person name="Wei Z."/>
            <person name="Lei X."/>
            <person name="Seldin M.M."/>
            <person name="Wong G.W."/>
        </authorList>
    </citation>
    <scope>FUNCTION</scope>
    <scope>SUBCELLULAR LOCATION</scope>
    <scope>SUBUNIT</scope>
    <scope>GLYCOSYLATION AT ASN-39</scope>
    <scope>DISULFIDE BOND</scope>
    <scope>PROTEOLYTIC PROCESSING</scope>
    <scope>MUTAGENESIS OF ASN-39; CYS-85; 90-LYS--ARG-93 AND ARG-93</scope>
</reference>
<reference key="9">
    <citation type="journal article" date="2013" name="Diabetes">
        <title>Loss of Kruppel-like factor 3 (KLF3/BKLF) leads to upregulation of the insulin-sensitizing factor adipolin (FAM132A/CTRP12/C1qdc2).</title>
        <authorList>
            <person name="Bell-Anderson K.S."/>
            <person name="Funnell A.P."/>
            <person name="Williams H."/>
            <person name="Mat Jusoh H."/>
            <person name="Scully T."/>
            <person name="Lim W.F."/>
            <person name="Burdach J.G."/>
            <person name="Mak K.S."/>
            <person name="Knights A.J."/>
            <person name="Hoy A.J."/>
            <person name="Nicholas H.R."/>
            <person name="Sainsbury A."/>
            <person name="Turner N."/>
            <person name="Pearson R.C."/>
            <person name="Crossley M."/>
        </authorList>
    </citation>
    <scope>INDUCTION</scope>
</reference>
<reference key="10">
    <citation type="journal article" date="2013" name="PLoS ONE">
        <title>Transcriptional regulation of an insulin-sensitizing adipokine adipolin/CTRP12 in adipocytes by Krueppel-like factor 15.</title>
        <authorList>
            <person name="Enomoto T."/>
            <person name="Ohashi K."/>
            <person name="Shibata R."/>
            <person name="Kambara T."/>
            <person name="Uemura Y."/>
            <person name="Yuasa D."/>
            <person name="Kataoka Y."/>
            <person name="Miyabe M."/>
            <person name="Matsuo K."/>
            <person name="Joki Y."/>
            <person name="Hayakawa S."/>
            <person name="Hiramatsu-Ito M."/>
            <person name="Ito M."/>
            <person name="Murohara T."/>
            <person name="Ouchi N."/>
        </authorList>
    </citation>
    <scope>INDUCTION</scope>
</reference>
<name>ADIPL_MOUSE</name>